<protein>
    <recommendedName>
        <fullName evidence="1">Threonylcarbamoyl-AMP synthase</fullName>
        <shortName evidence="1">TC-AMP synthase</shortName>
        <ecNumber evidence="1">2.7.7.87</ecNumber>
    </recommendedName>
    <alternativeName>
        <fullName evidence="1">L-threonylcarbamoyladenylate synthase</fullName>
    </alternativeName>
    <alternativeName>
        <fullName evidence="1">t(6)A37 threonylcarbamoyladenosine biosynthesis protein TsaC</fullName>
    </alternativeName>
    <alternativeName>
        <fullName evidence="1">tRNA threonylcarbamoyladenosine biosynthesis protein TsaC</fullName>
    </alternativeName>
</protein>
<comment type="function">
    <text evidence="1">Required for the formation of a threonylcarbamoyl group on adenosine at position 37 (t(6)A37) in tRNAs that read codons beginning with adenine. Catalyzes the conversion of L-threonine, HCO(3)(-)/CO(2) and ATP to give threonylcarbamoyl-AMP (TC-AMP) as the acyladenylate intermediate, with the release of diphosphate.</text>
</comment>
<comment type="catalytic activity">
    <reaction evidence="1">
        <text>L-threonine + hydrogencarbonate + ATP = L-threonylcarbamoyladenylate + diphosphate + H2O</text>
        <dbReference type="Rhea" id="RHEA:36407"/>
        <dbReference type="ChEBI" id="CHEBI:15377"/>
        <dbReference type="ChEBI" id="CHEBI:17544"/>
        <dbReference type="ChEBI" id="CHEBI:30616"/>
        <dbReference type="ChEBI" id="CHEBI:33019"/>
        <dbReference type="ChEBI" id="CHEBI:57926"/>
        <dbReference type="ChEBI" id="CHEBI:73682"/>
        <dbReference type="EC" id="2.7.7.87"/>
    </reaction>
</comment>
<comment type="subcellular location">
    <subcellularLocation>
        <location evidence="1">Cytoplasm</location>
    </subcellularLocation>
</comment>
<comment type="similarity">
    <text evidence="1">Belongs to the SUA5 family. TsaC subfamily.</text>
</comment>
<dbReference type="EC" id="2.7.7.87" evidence="1"/>
<dbReference type="EMBL" id="AE008922">
    <property type="protein sequence ID" value="AAM43013.1"/>
    <property type="molecule type" value="Genomic_DNA"/>
</dbReference>
<dbReference type="RefSeq" id="NP_639101.1">
    <property type="nucleotide sequence ID" value="NC_003902.1"/>
</dbReference>
<dbReference type="RefSeq" id="WP_011038838.1">
    <property type="nucleotide sequence ID" value="NC_003902.1"/>
</dbReference>
<dbReference type="SMR" id="Q8P4F2"/>
<dbReference type="STRING" id="190485.XCC3756"/>
<dbReference type="EnsemblBacteria" id="AAM43013">
    <property type="protein sequence ID" value="AAM43013"/>
    <property type="gene ID" value="XCC3756"/>
</dbReference>
<dbReference type="KEGG" id="xcc:XCC3756"/>
<dbReference type="PATRIC" id="fig|190485.4.peg.4018"/>
<dbReference type="eggNOG" id="COG0009">
    <property type="taxonomic scope" value="Bacteria"/>
</dbReference>
<dbReference type="HOGENOM" id="CLU_031397_6_0_6"/>
<dbReference type="OrthoDB" id="9814580at2"/>
<dbReference type="Proteomes" id="UP000001010">
    <property type="component" value="Chromosome"/>
</dbReference>
<dbReference type="GO" id="GO:0005737">
    <property type="term" value="C:cytoplasm"/>
    <property type="evidence" value="ECO:0000318"/>
    <property type="project" value="GO_Central"/>
</dbReference>
<dbReference type="GO" id="GO:0005524">
    <property type="term" value="F:ATP binding"/>
    <property type="evidence" value="ECO:0007669"/>
    <property type="project" value="UniProtKB-UniRule"/>
</dbReference>
<dbReference type="GO" id="GO:0003725">
    <property type="term" value="F:double-stranded RNA binding"/>
    <property type="evidence" value="ECO:0007669"/>
    <property type="project" value="InterPro"/>
</dbReference>
<dbReference type="GO" id="GO:0061710">
    <property type="term" value="F:L-threonylcarbamoyladenylate synthase"/>
    <property type="evidence" value="ECO:0007669"/>
    <property type="project" value="UniProtKB-EC"/>
</dbReference>
<dbReference type="GO" id="GO:0016779">
    <property type="term" value="F:nucleotidyltransferase activity"/>
    <property type="evidence" value="ECO:0000318"/>
    <property type="project" value="GO_Central"/>
</dbReference>
<dbReference type="GO" id="GO:0000049">
    <property type="term" value="F:tRNA binding"/>
    <property type="evidence" value="ECO:0000318"/>
    <property type="project" value="GO_Central"/>
</dbReference>
<dbReference type="GO" id="GO:0006450">
    <property type="term" value="P:regulation of translational fidelity"/>
    <property type="evidence" value="ECO:0000318"/>
    <property type="project" value="GO_Central"/>
</dbReference>
<dbReference type="GO" id="GO:0002949">
    <property type="term" value="P:tRNA threonylcarbamoyladenosine modification"/>
    <property type="evidence" value="ECO:0007669"/>
    <property type="project" value="UniProtKB-UniRule"/>
</dbReference>
<dbReference type="FunFam" id="3.90.870.10:FF:000004">
    <property type="entry name" value="Threonylcarbamoyl-AMP synthase"/>
    <property type="match status" value="1"/>
</dbReference>
<dbReference type="Gene3D" id="3.90.870.10">
    <property type="entry name" value="DHBP synthase"/>
    <property type="match status" value="1"/>
</dbReference>
<dbReference type="HAMAP" id="MF_01852">
    <property type="entry name" value="TsaC"/>
    <property type="match status" value="1"/>
</dbReference>
<dbReference type="InterPro" id="IPR017945">
    <property type="entry name" value="DHBP_synth_RibB-like_a/b_dom"/>
</dbReference>
<dbReference type="InterPro" id="IPR006070">
    <property type="entry name" value="Sua5-like_dom"/>
</dbReference>
<dbReference type="InterPro" id="IPR023535">
    <property type="entry name" value="TC-AMP_synthase"/>
</dbReference>
<dbReference type="InterPro" id="IPR050156">
    <property type="entry name" value="TC-AMP_synthase_SUA5"/>
</dbReference>
<dbReference type="PANTHER" id="PTHR17490">
    <property type="entry name" value="SUA5"/>
    <property type="match status" value="1"/>
</dbReference>
<dbReference type="PANTHER" id="PTHR17490:SF18">
    <property type="entry name" value="THREONYLCARBAMOYL-AMP SYNTHASE"/>
    <property type="match status" value="1"/>
</dbReference>
<dbReference type="Pfam" id="PF01300">
    <property type="entry name" value="Sua5_yciO_yrdC"/>
    <property type="match status" value="1"/>
</dbReference>
<dbReference type="SUPFAM" id="SSF55821">
    <property type="entry name" value="YrdC/RibB"/>
    <property type="match status" value="1"/>
</dbReference>
<dbReference type="PROSITE" id="PS51163">
    <property type="entry name" value="YRDC"/>
    <property type="match status" value="1"/>
</dbReference>
<name>TSAC_XANCP</name>
<feature type="chain" id="PRO_0000353010" description="Threonylcarbamoyl-AMP synthase">
    <location>
        <begin position="1"/>
        <end position="187"/>
    </location>
</feature>
<feature type="domain" description="YrdC-like" evidence="1">
    <location>
        <begin position="4"/>
        <end position="187"/>
    </location>
</feature>
<gene>
    <name evidence="1" type="primary">tsaC</name>
    <name type="synonym">rimN</name>
    <name type="ordered locus">XCC3756</name>
</gene>
<organism>
    <name type="scientific">Xanthomonas campestris pv. campestris (strain ATCC 33913 / DSM 3586 / NCPPB 528 / LMG 568 / P 25)</name>
    <dbReference type="NCBI Taxonomy" id="190485"/>
    <lineage>
        <taxon>Bacteria</taxon>
        <taxon>Pseudomonadati</taxon>
        <taxon>Pseudomonadota</taxon>
        <taxon>Gammaproteobacteria</taxon>
        <taxon>Lysobacterales</taxon>
        <taxon>Lysobacteraceae</taxon>
        <taxon>Xanthomonas</taxon>
    </lineage>
</organism>
<sequence>MPHTPDLDAAVATLARGGVIAYPTEAVWGLGCDPRQEDAVLRLLEIKRRPVDKGVIVVASGLDVLQDWIDIAALGSEQLTAVLAQWPGPHTWILPVTAQAPRWVTGDHDGLAVRISAHPVVAALCKAWGAPLVSTSANLAGEPPARSRAALDPALLARIDGVLDGEVGGLAQPTPIRDARTGQILRD</sequence>
<accession>Q8P4F2</accession>
<keyword id="KW-0067">ATP-binding</keyword>
<keyword id="KW-0963">Cytoplasm</keyword>
<keyword id="KW-0547">Nucleotide-binding</keyword>
<keyword id="KW-0548">Nucleotidyltransferase</keyword>
<keyword id="KW-1185">Reference proteome</keyword>
<keyword id="KW-0808">Transferase</keyword>
<keyword id="KW-0819">tRNA processing</keyword>
<reference key="1">
    <citation type="journal article" date="2002" name="Nature">
        <title>Comparison of the genomes of two Xanthomonas pathogens with differing host specificities.</title>
        <authorList>
            <person name="da Silva A.C.R."/>
            <person name="Ferro J.A."/>
            <person name="Reinach F.C."/>
            <person name="Farah C.S."/>
            <person name="Furlan L.R."/>
            <person name="Quaggio R.B."/>
            <person name="Monteiro-Vitorello C.B."/>
            <person name="Van Sluys M.A."/>
            <person name="Almeida N.F. Jr."/>
            <person name="Alves L.M.C."/>
            <person name="do Amaral A.M."/>
            <person name="Bertolini M.C."/>
            <person name="Camargo L.E.A."/>
            <person name="Camarotte G."/>
            <person name="Cannavan F."/>
            <person name="Cardozo J."/>
            <person name="Chambergo F."/>
            <person name="Ciapina L.P."/>
            <person name="Cicarelli R.M.B."/>
            <person name="Coutinho L.L."/>
            <person name="Cursino-Santos J.R."/>
            <person name="El-Dorry H."/>
            <person name="Faria J.B."/>
            <person name="Ferreira A.J.S."/>
            <person name="Ferreira R.C.C."/>
            <person name="Ferro M.I.T."/>
            <person name="Formighieri E.F."/>
            <person name="Franco M.C."/>
            <person name="Greggio C.C."/>
            <person name="Gruber A."/>
            <person name="Katsuyama A.M."/>
            <person name="Kishi L.T."/>
            <person name="Leite R.P."/>
            <person name="Lemos E.G.M."/>
            <person name="Lemos M.V.F."/>
            <person name="Locali E.C."/>
            <person name="Machado M.A."/>
            <person name="Madeira A.M.B.N."/>
            <person name="Martinez-Rossi N.M."/>
            <person name="Martins E.C."/>
            <person name="Meidanis J."/>
            <person name="Menck C.F.M."/>
            <person name="Miyaki C.Y."/>
            <person name="Moon D.H."/>
            <person name="Moreira L.M."/>
            <person name="Novo M.T.M."/>
            <person name="Okura V.K."/>
            <person name="Oliveira M.C."/>
            <person name="Oliveira V.R."/>
            <person name="Pereira H.A."/>
            <person name="Rossi A."/>
            <person name="Sena J.A.D."/>
            <person name="Silva C."/>
            <person name="de Souza R.F."/>
            <person name="Spinola L.A.F."/>
            <person name="Takita M.A."/>
            <person name="Tamura R.E."/>
            <person name="Teixeira E.C."/>
            <person name="Tezza R.I.D."/>
            <person name="Trindade dos Santos M."/>
            <person name="Truffi D."/>
            <person name="Tsai S.M."/>
            <person name="White F.F."/>
            <person name="Setubal J.C."/>
            <person name="Kitajima J.P."/>
        </authorList>
    </citation>
    <scope>NUCLEOTIDE SEQUENCE [LARGE SCALE GENOMIC DNA]</scope>
    <source>
        <strain>ATCC 33913 / DSM 3586 / NCPPB 528 / LMG 568 / P 25</strain>
    </source>
</reference>
<proteinExistence type="inferred from homology"/>
<evidence type="ECO:0000255" key="1">
    <source>
        <dbReference type="HAMAP-Rule" id="MF_01852"/>
    </source>
</evidence>